<name>PSB7_RAT</name>
<protein>
    <recommendedName>
        <fullName>Proteasome subunit beta type-7</fullName>
        <ecNumber>3.4.25.1</ecNumber>
    </recommendedName>
    <alternativeName>
        <fullName>Macropain chain Z</fullName>
    </alternativeName>
    <alternativeName>
        <fullName>Multicatalytic endopeptidase complex chain Z</fullName>
    </alternativeName>
    <alternativeName>
        <fullName>Proteasome subunit Z</fullName>
    </alternativeName>
    <alternativeName>
        <fullName>Proteasome subunit beta-2</fullName>
        <shortName>beta-2</shortName>
    </alternativeName>
</protein>
<dbReference type="EC" id="3.4.25.1"/>
<dbReference type="EMBL" id="AF285103">
    <property type="protein sequence ID" value="AAF97811.1"/>
    <property type="molecule type" value="mRNA"/>
</dbReference>
<dbReference type="EMBL" id="BC060551">
    <property type="protein sequence ID" value="AAH60551.1"/>
    <property type="molecule type" value="mRNA"/>
</dbReference>
<dbReference type="PIR" id="S09082">
    <property type="entry name" value="S09082"/>
</dbReference>
<dbReference type="RefSeq" id="NP_445984.1">
    <property type="nucleotide sequence ID" value="NM_053532.1"/>
</dbReference>
<dbReference type="PDB" id="6EPC">
    <property type="method" value="EM"/>
    <property type="resolution" value="12.30 A"/>
    <property type="chains" value="2=1-277"/>
</dbReference>
<dbReference type="PDB" id="6EPD">
    <property type="method" value="EM"/>
    <property type="resolution" value="15.40 A"/>
    <property type="chains" value="2=1-277"/>
</dbReference>
<dbReference type="PDB" id="6EPE">
    <property type="method" value="EM"/>
    <property type="resolution" value="12.80 A"/>
    <property type="chains" value="2=1-277"/>
</dbReference>
<dbReference type="PDB" id="6EPF">
    <property type="method" value="EM"/>
    <property type="resolution" value="11.80 A"/>
    <property type="chains" value="2=1-277"/>
</dbReference>
<dbReference type="PDB" id="6TU3">
    <property type="method" value="EM"/>
    <property type="resolution" value="2.70 A"/>
    <property type="chains" value="I/W=1-277"/>
</dbReference>
<dbReference type="PDBsum" id="6EPC"/>
<dbReference type="PDBsum" id="6EPD"/>
<dbReference type="PDBsum" id="6EPE"/>
<dbReference type="PDBsum" id="6EPF"/>
<dbReference type="PDBsum" id="6TU3"/>
<dbReference type="EMDB" id="EMD-10586"/>
<dbReference type="EMDB" id="EMD-3913"/>
<dbReference type="EMDB" id="EMD-3914"/>
<dbReference type="EMDB" id="EMD-3915"/>
<dbReference type="EMDB" id="EMD-3916"/>
<dbReference type="SMR" id="Q9JHW0"/>
<dbReference type="BioGRID" id="250112">
    <property type="interactions" value="2"/>
</dbReference>
<dbReference type="ComplexPortal" id="CPX-8965">
    <property type="entry name" value="30S proteasome complex"/>
</dbReference>
<dbReference type="FunCoup" id="Q9JHW0">
    <property type="interactions" value="3069"/>
</dbReference>
<dbReference type="IntAct" id="Q9JHW0">
    <property type="interactions" value="1"/>
</dbReference>
<dbReference type="STRING" id="10116.ENSRNOP00000069167"/>
<dbReference type="MEROPS" id="T01.011"/>
<dbReference type="iPTMnet" id="Q9JHW0"/>
<dbReference type="PhosphoSitePlus" id="Q9JHW0"/>
<dbReference type="jPOST" id="Q9JHW0"/>
<dbReference type="PaxDb" id="10116-ENSRNOP00000016876"/>
<dbReference type="GeneID" id="85492"/>
<dbReference type="KEGG" id="rno:85492"/>
<dbReference type="UCSC" id="RGD:621093">
    <property type="organism name" value="rat"/>
</dbReference>
<dbReference type="AGR" id="RGD:621093"/>
<dbReference type="CTD" id="5695"/>
<dbReference type="RGD" id="621093">
    <property type="gene designation" value="Psmb7"/>
</dbReference>
<dbReference type="VEuPathDB" id="HostDB:ENSRNOG00000011732"/>
<dbReference type="eggNOG" id="KOG0173">
    <property type="taxonomic scope" value="Eukaryota"/>
</dbReference>
<dbReference type="InParanoid" id="Q9JHW0"/>
<dbReference type="OrthoDB" id="49395at9989"/>
<dbReference type="PhylomeDB" id="Q9JHW0"/>
<dbReference type="TreeFam" id="TF106222"/>
<dbReference type="Reactome" id="R-RNO-1169091">
    <property type="pathway name" value="Activation of NF-kappaB in B cells"/>
</dbReference>
<dbReference type="Reactome" id="R-RNO-1234176">
    <property type="pathway name" value="Oxygen-dependent proline hydroxylation of Hypoxia-inducible Factor Alpha"/>
</dbReference>
<dbReference type="Reactome" id="R-RNO-1236978">
    <property type="pathway name" value="Cross-presentation of soluble exogenous antigens (endosomes)"/>
</dbReference>
<dbReference type="Reactome" id="R-RNO-174084">
    <property type="pathway name" value="Autodegradation of Cdh1 by Cdh1:APC/C"/>
</dbReference>
<dbReference type="Reactome" id="R-RNO-174113">
    <property type="pathway name" value="SCF-beta-TrCP mediated degradation of Emi1"/>
</dbReference>
<dbReference type="Reactome" id="R-RNO-174154">
    <property type="pathway name" value="APC/C:Cdc20 mediated degradation of Securin"/>
</dbReference>
<dbReference type="Reactome" id="R-RNO-174178">
    <property type="pathway name" value="APC/C:Cdh1 mediated degradation of Cdc20 and other APC/C:Cdh1 targeted proteins in late mitosis/early G1"/>
</dbReference>
<dbReference type="Reactome" id="R-RNO-174184">
    <property type="pathway name" value="Cdc20:Phospho-APC/C mediated degradation of Cyclin A"/>
</dbReference>
<dbReference type="Reactome" id="R-RNO-187577">
    <property type="pathway name" value="SCF(Skp2)-mediated degradation of p27/p21"/>
</dbReference>
<dbReference type="Reactome" id="R-RNO-195253">
    <property type="pathway name" value="Degradation of beta-catenin by the destruction complex"/>
</dbReference>
<dbReference type="Reactome" id="R-RNO-2467813">
    <property type="pathway name" value="Separation of Sister Chromatids"/>
</dbReference>
<dbReference type="Reactome" id="R-RNO-349425">
    <property type="pathway name" value="Autodegradation of the E3 ubiquitin ligase COP1"/>
</dbReference>
<dbReference type="Reactome" id="R-RNO-350562">
    <property type="pathway name" value="Regulation of ornithine decarboxylase (ODC)"/>
</dbReference>
<dbReference type="Reactome" id="R-RNO-382556">
    <property type="pathway name" value="ABC-family proteins mediated transport"/>
</dbReference>
<dbReference type="Reactome" id="R-RNO-450408">
    <property type="pathway name" value="AUF1 (hnRNP D0) binds and destabilizes mRNA"/>
</dbReference>
<dbReference type="Reactome" id="R-RNO-4608870">
    <property type="pathway name" value="Asymmetric localization of PCP proteins"/>
</dbReference>
<dbReference type="Reactome" id="R-RNO-4641257">
    <property type="pathway name" value="Degradation of AXIN"/>
</dbReference>
<dbReference type="Reactome" id="R-RNO-4641258">
    <property type="pathway name" value="Degradation of DVL"/>
</dbReference>
<dbReference type="Reactome" id="R-RNO-5358346">
    <property type="pathway name" value="Hedgehog ligand biogenesis"/>
</dbReference>
<dbReference type="Reactome" id="R-RNO-5607761">
    <property type="pathway name" value="Dectin-1 mediated noncanonical NF-kB signaling"/>
</dbReference>
<dbReference type="Reactome" id="R-RNO-5610780">
    <property type="pathway name" value="Degradation of GLI1 by the proteasome"/>
</dbReference>
<dbReference type="Reactome" id="R-RNO-5610785">
    <property type="pathway name" value="GLI3 is processed to GLI3R by the proteasome"/>
</dbReference>
<dbReference type="Reactome" id="R-RNO-5632684">
    <property type="pathway name" value="Hedgehog 'on' state"/>
</dbReference>
<dbReference type="Reactome" id="R-RNO-5658442">
    <property type="pathway name" value="Regulation of RAS by GAPs"/>
</dbReference>
<dbReference type="Reactome" id="R-RNO-5668541">
    <property type="pathway name" value="TNFR2 non-canonical NF-kB pathway"/>
</dbReference>
<dbReference type="Reactome" id="R-RNO-5676590">
    <property type="pathway name" value="NIK--&gt;noncanonical NF-kB signaling"/>
</dbReference>
<dbReference type="Reactome" id="R-RNO-5687128">
    <property type="pathway name" value="MAPK6/MAPK4 signaling"/>
</dbReference>
<dbReference type="Reactome" id="R-RNO-5689603">
    <property type="pathway name" value="UCH proteinases"/>
</dbReference>
<dbReference type="Reactome" id="R-RNO-5689880">
    <property type="pathway name" value="Ub-specific processing proteases"/>
</dbReference>
<dbReference type="Reactome" id="R-RNO-6798695">
    <property type="pathway name" value="Neutrophil degranulation"/>
</dbReference>
<dbReference type="Reactome" id="R-RNO-68867">
    <property type="pathway name" value="Assembly of the pre-replicative complex"/>
</dbReference>
<dbReference type="Reactome" id="R-RNO-68949">
    <property type="pathway name" value="Orc1 removal from chromatin"/>
</dbReference>
<dbReference type="Reactome" id="R-RNO-69017">
    <property type="pathway name" value="CDK-mediated phosphorylation and removal of Cdc6"/>
</dbReference>
<dbReference type="Reactome" id="R-RNO-69481">
    <property type="pathway name" value="G2/M Checkpoints"/>
</dbReference>
<dbReference type="Reactome" id="R-RNO-69601">
    <property type="pathway name" value="Ubiquitin Mediated Degradation of Phosphorylated Cdc25A"/>
</dbReference>
<dbReference type="Reactome" id="R-RNO-75815">
    <property type="pathway name" value="Ubiquitin-dependent degradation of Cyclin D"/>
</dbReference>
<dbReference type="Reactome" id="R-RNO-8852276">
    <property type="pathway name" value="The role of GTSE1 in G2/M progression after G2 checkpoint"/>
</dbReference>
<dbReference type="Reactome" id="R-RNO-8854050">
    <property type="pathway name" value="FBXL7 down-regulates AURKA during mitotic entry and in early mitosis"/>
</dbReference>
<dbReference type="Reactome" id="R-RNO-8939236">
    <property type="pathway name" value="RUNX1 regulates transcription of genes involved in differentiation of HSCs"/>
</dbReference>
<dbReference type="Reactome" id="R-RNO-8941858">
    <property type="pathway name" value="Regulation of RUNX3 expression and activity"/>
</dbReference>
<dbReference type="Reactome" id="R-RNO-8948751">
    <property type="pathway name" value="Regulation of PTEN stability and activity"/>
</dbReference>
<dbReference type="Reactome" id="R-RNO-8951664">
    <property type="pathway name" value="Neddylation"/>
</dbReference>
<dbReference type="Reactome" id="R-RNO-9755511">
    <property type="pathway name" value="KEAP1-NFE2L2 pathway"/>
</dbReference>
<dbReference type="Reactome" id="R-RNO-9762114">
    <property type="pathway name" value="GSK3B and BTRC:CUL1-mediated-degradation of NFE2L2"/>
</dbReference>
<dbReference type="Reactome" id="R-RNO-983168">
    <property type="pathway name" value="Antigen processing: Ubiquitination &amp; Proteasome degradation"/>
</dbReference>
<dbReference type="Reactome" id="R-RNO-9907900">
    <property type="pathway name" value="Proteasome assembly"/>
</dbReference>
<dbReference type="PRO" id="PR:Q9JHW0"/>
<dbReference type="Proteomes" id="UP000002494">
    <property type="component" value="Chromosome 3"/>
</dbReference>
<dbReference type="Bgee" id="ENSRNOG00000011732">
    <property type="expression patterns" value="Expressed in skeletal muscle tissue and 20 other cell types or tissues"/>
</dbReference>
<dbReference type="ExpressionAtlas" id="Q9JHW0">
    <property type="expression patterns" value="baseline and differential"/>
</dbReference>
<dbReference type="GO" id="GO:0005737">
    <property type="term" value="C:cytoplasm"/>
    <property type="evidence" value="ECO:0000266"/>
    <property type="project" value="RGD"/>
</dbReference>
<dbReference type="GO" id="GO:0005829">
    <property type="term" value="C:cytosol"/>
    <property type="evidence" value="ECO:0000318"/>
    <property type="project" value="GO_Central"/>
</dbReference>
<dbReference type="GO" id="GO:0005634">
    <property type="term" value="C:nucleus"/>
    <property type="evidence" value="ECO:0000266"/>
    <property type="project" value="RGD"/>
</dbReference>
<dbReference type="GO" id="GO:0000502">
    <property type="term" value="C:proteasome complex"/>
    <property type="evidence" value="ECO:0000266"/>
    <property type="project" value="RGD"/>
</dbReference>
<dbReference type="GO" id="GO:0005839">
    <property type="term" value="C:proteasome core complex"/>
    <property type="evidence" value="ECO:0000250"/>
    <property type="project" value="UniProtKB"/>
</dbReference>
<dbReference type="GO" id="GO:0019774">
    <property type="term" value="C:proteasome core complex, beta-subunit complex"/>
    <property type="evidence" value="ECO:0000250"/>
    <property type="project" value="UniProtKB"/>
</dbReference>
<dbReference type="GO" id="GO:0004175">
    <property type="term" value="F:endopeptidase activity"/>
    <property type="evidence" value="ECO:0000318"/>
    <property type="project" value="GO_Central"/>
</dbReference>
<dbReference type="GO" id="GO:0004298">
    <property type="term" value="F:threonine-type endopeptidase activity"/>
    <property type="evidence" value="ECO:0007669"/>
    <property type="project" value="UniProtKB-KW"/>
</dbReference>
<dbReference type="GO" id="GO:0043161">
    <property type="term" value="P:proteasome-mediated ubiquitin-dependent protein catabolic process"/>
    <property type="evidence" value="ECO:0000318"/>
    <property type="project" value="GO_Central"/>
</dbReference>
<dbReference type="CDD" id="cd03763">
    <property type="entry name" value="proteasome_beta_type_7"/>
    <property type="match status" value="1"/>
</dbReference>
<dbReference type="FunFam" id="3.60.20.10:FF:000005">
    <property type="entry name" value="Proteasome subunit beta type-2"/>
    <property type="match status" value="1"/>
</dbReference>
<dbReference type="Gene3D" id="3.60.20.10">
    <property type="entry name" value="Glutamine Phosphoribosylpyrophosphate, subunit 1, domain 1"/>
    <property type="match status" value="1"/>
</dbReference>
<dbReference type="InterPro" id="IPR029055">
    <property type="entry name" value="Ntn_hydrolases_N"/>
</dbReference>
<dbReference type="InterPro" id="IPR000243">
    <property type="entry name" value="Pept_T1A_subB"/>
</dbReference>
<dbReference type="InterPro" id="IPR024689">
    <property type="entry name" value="Proteasome_bsu_C"/>
</dbReference>
<dbReference type="InterPro" id="IPR016050">
    <property type="entry name" value="Proteasome_bsu_CS"/>
</dbReference>
<dbReference type="InterPro" id="IPR001353">
    <property type="entry name" value="Proteasome_sua/b"/>
</dbReference>
<dbReference type="InterPro" id="IPR023333">
    <property type="entry name" value="Proteasome_suB-type"/>
</dbReference>
<dbReference type="PANTHER" id="PTHR32194">
    <property type="entry name" value="METALLOPROTEASE TLDD"/>
    <property type="match status" value="1"/>
</dbReference>
<dbReference type="PANTHER" id="PTHR32194:SF4">
    <property type="entry name" value="PROTEASOME SUBUNIT BETA TYPE-7"/>
    <property type="match status" value="1"/>
</dbReference>
<dbReference type="Pfam" id="PF12465">
    <property type="entry name" value="Pr_beta_C"/>
    <property type="match status" value="1"/>
</dbReference>
<dbReference type="Pfam" id="PF00227">
    <property type="entry name" value="Proteasome"/>
    <property type="match status" value="1"/>
</dbReference>
<dbReference type="PRINTS" id="PR00141">
    <property type="entry name" value="PROTEASOME"/>
</dbReference>
<dbReference type="SUPFAM" id="SSF56235">
    <property type="entry name" value="N-terminal nucleophile aminohydrolases (Ntn hydrolases)"/>
    <property type="match status" value="1"/>
</dbReference>
<dbReference type="PROSITE" id="PS00854">
    <property type="entry name" value="PROTEASOME_BETA_1"/>
    <property type="match status" value="1"/>
</dbReference>
<dbReference type="PROSITE" id="PS51476">
    <property type="entry name" value="PROTEASOME_BETA_2"/>
    <property type="match status" value="1"/>
</dbReference>
<gene>
    <name type="primary">Psmb7</name>
</gene>
<accession>Q9JHW0</accession>
<sequence length="277" mass="29927">MAAVSVFQAPVGGFSFDNCRRNAVLEADFAKKGFKLPKARKTGTTIAGVVYKDGIVLGADTRATEGMVVADKNCSKIHFISPNIYCCGAGTAADTDMTTQLISSNLELHSLTTGRLPRVVTANRMLKQMLFRYQGYIGAALVLGGVDVTGPHLYSIYPHGSTDKLPYVTMGSGSLAAMAVFEDKFRPDMEEEEAKKLVSEAIAAGIFNDLGSGSNIDLCVISKSKLDFLRPYSVPNKKGTRFGRYRCEKGTTAVLTEKVTPLELEVLEEIVQTMDTS</sequence>
<reference key="1">
    <citation type="submission" date="2000-07" db="EMBL/GenBank/DDBJ databases">
        <authorList>
            <person name="Kang J.S."/>
            <person name="Liu H.L."/>
            <person name="Li R.X."/>
        </authorList>
    </citation>
    <scope>NUCLEOTIDE SEQUENCE [MRNA]</scope>
    <source>
        <strain>Sprague-Dawley</strain>
        <tissue>Brain</tissue>
    </source>
</reference>
<reference key="2">
    <citation type="journal article" date="2004" name="Genome Res.">
        <title>The status, quality, and expansion of the NIH full-length cDNA project: the Mammalian Gene Collection (MGC).</title>
        <authorList>
            <consortium name="The MGC Project Team"/>
        </authorList>
    </citation>
    <scope>NUCLEOTIDE SEQUENCE [LARGE SCALE MRNA]</scope>
    <source>
        <tissue>Pituitary</tissue>
    </source>
</reference>
<reference key="3">
    <citation type="submission" date="2007-04" db="UniProtKB">
        <authorList>
            <person name="Lubec G."/>
            <person name="Chen W.-Q."/>
        </authorList>
    </citation>
    <scope>PROTEIN SEQUENCE OF 44-72; 165-184 AND 226-237</scope>
    <scope>IDENTIFICATION BY MASS SPECTROMETRY</scope>
    <source>
        <strain>Sprague-Dawley</strain>
        <tissue>Hippocampus</tissue>
    </source>
</reference>
<reference key="4">
    <citation type="journal article" date="2012" name="Nat. Commun.">
        <title>Quantitative maps of protein phosphorylation sites across 14 different rat organs and tissues.</title>
        <authorList>
            <person name="Lundby A."/>
            <person name="Secher A."/>
            <person name="Lage K."/>
            <person name="Nordsborg N.B."/>
            <person name="Dmytriyev A."/>
            <person name="Lundby C."/>
            <person name="Olsen J.V."/>
        </authorList>
    </citation>
    <scope>IDENTIFICATION BY MASS SPECTROMETRY [LARGE SCALE ANALYSIS]</scope>
</reference>
<comment type="function">
    <text evidence="2">Component of the 20S core proteasome complex involved in the proteolytic degradation of most intracellular proteins. This complex plays numerous essential roles within the cell by associating with different regulatory particles. Associated with two 19S regulatory particles, forms the 26S proteasome and thus participates in the ATP-dependent degradation of ubiquitinated proteins. The 26S proteasome plays a key role in the maintenance of protein homeostasis by removing misfolded or damaged proteins that could impair cellular functions, and by removing proteins whose functions are no longer required. Associated with the PA200 or PA28, the 20S proteasome mediates ubiquitin-independent protein degradation. This type of proteolysis is required in several pathways including spermatogenesis (20S-PA200 complex) or generation of a subset of MHC class I-presented antigenic peptides (20S-PA28 complex). Within the 20S core complex, PSMB7 displays a trypsin-like activity.</text>
</comment>
<comment type="catalytic activity">
    <reaction evidence="2">
        <text>Cleavage of peptide bonds with very broad specificity.</text>
        <dbReference type="EC" id="3.4.25.1"/>
    </reaction>
</comment>
<comment type="subunit">
    <text evidence="2">The 26S proteasome consists of a 20S proteasome core and two 19S regulatory subunits. The 20S proteasome core is a barrel-shaped complex made of 28 subunits that are arranged in four stacked rings. The two outer rings are each formed by seven alpha subunits, and the two inner rings are formed by seven beta subunits. The proteolytic activity is exerted by three beta-subunits PSMB5, PSMB6 and PSMB7.</text>
</comment>
<comment type="subcellular location">
    <subcellularLocation>
        <location evidence="2">Cytoplasm</location>
    </subcellularLocation>
    <subcellularLocation>
        <location evidence="2">Nucleus</location>
    </subcellularLocation>
    <text evidence="2">Translocated from the cytoplasm into the nucleus following interaction with AKIRIN2, which bridges the proteasome with the nuclear import receptor IPO9.</text>
</comment>
<comment type="similarity">
    <text evidence="3">Belongs to the peptidase T1B family.</text>
</comment>
<keyword id="KW-0002">3D-structure</keyword>
<keyword id="KW-0963">Cytoplasm</keyword>
<keyword id="KW-0903">Direct protein sequencing</keyword>
<keyword id="KW-0378">Hydrolase</keyword>
<keyword id="KW-0539">Nucleus</keyword>
<keyword id="KW-0645">Protease</keyword>
<keyword id="KW-0647">Proteasome</keyword>
<keyword id="KW-1185">Reference proteome</keyword>
<keyword id="KW-0888">Threonine protease</keyword>
<keyword id="KW-0865">Zymogen</keyword>
<feature type="propeptide" id="PRO_0000026649" description="Removed in mature form" evidence="1">
    <location>
        <begin position="1"/>
        <end position="43"/>
    </location>
</feature>
<feature type="chain" id="PRO_0000026650" description="Proteasome subunit beta type-7">
    <location>
        <begin position="44"/>
        <end position="277"/>
    </location>
</feature>
<feature type="active site" description="Nucleophile" evidence="1">
    <location>
        <position position="44"/>
    </location>
</feature>
<feature type="strand" evidence="4">
    <location>
        <begin position="45"/>
        <end position="51"/>
    </location>
</feature>
<feature type="strand" evidence="4">
    <location>
        <begin position="54"/>
        <end position="60"/>
    </location>
</feature>
<feature type="strand" evidence="4">
    <location>
        <begin position="63"/>
        <end position="65"/>
    </location>
</feature>
<feature type="strand" evidence="4">
    <location>
        <begin position="68"/>
        <end position="73"/>
    </location>
</feature>
<feature type="strand" evidence="4">
    <location>
        <begin position="77"/>
        <end position="81"/>
    </location>
</feature>
<feature type="strand" evidence="4">
    <location>
        <begin position="84"/>
        <end position="90"/>
    </location>
</feature>
<feature type="helix" evidence="4">
    <location>
        <begin position="92"/>
        <end position="113"/>
    </location>
</feature>
<feature type="helix" evidence="4">
    <location>
        <begin position="119"/>
        <end position="132"/>
    </location>
</feature>
<feature type="turn" evidence="4">
    <location>
        <begin position="133"/>
        <end position="135"/>
    </location>
</feature>
<feature type="strand" evidence="4">
    <location>
        <begin position="139"/>
        <end position="141"/>
    </location>
</feature>
<feature type="strand" evidence="4">
    <location>
        <begin position="144"/>
        <end position="147"/>
    </location>
</feature>
<feature type="strand" evidence="4">
    <location>
        <begin position="150"/>
        <end position="156"/>
    </location>
</feature>
<feature type="strand" evidence="4">
    <location>
        <begin position="162"/>
        <end position="164"/>
    </location>
</feature>
<feature type="strand" evidence="4">
    <location>
        <begin position="166"/>
        <end position="173"/>
    </location>
</feature>
<feature type="helix" evidence="4">
    <location>
        <begin position="174"/>
        <end position="184"/>
    </location>
</feature>
<feature type="helix" evidence="4">
    <location>
        <begin position="191"/>
        <end position="208"/>
    </location>
</feature>
<feature type="strand" evidence="4">
    <location>
        <begin position="216"/>
        <end position="224"/>
    </location>
</feature>
<feature type="strand" evidence="4">
    <location>
        <begin position="226"/>
        <end position="233"/>
    </location>
</feature>
<proteinExistence type="evidence at protein level"/>
<evidence type="ECO:0000250" key="1"/>
<evidence type="ECO:0000250" key="2">
    <source>
        <dbReference type="UniProtKB" id="Q99436"/>
    </source>
</evidence>
<evidence type="ECO:0000255" key="3">
    <source>
        <dbReference type="PROSITE-ProRule" id="PRU00809"/>
    </source>
</evidence>
<evidence type="ECO:0007829" key="4">
    <source>
        <dbReference type="PDB" id="6TU3"/>
    </source>
</evidence>
<organism>
    <name type="scientific">Rattus norvegicus</name>
    <name type="common">Rat</name>
    <dbReference type="NCBI Taxonomy" id="10116"/>
    <lineage>
        <taxon>Eukaryota</taxon>
        <taxon>Metazoa</taxon>
        <taxon>Chordata</taxon>
        <taxon>Craniata</taxon>
        <taxon>Vertebrata</taxon>
        <taxon>Euteleostomi</taxon>
        <taxon>Mammalia</taxon>
        <taxon>Eutheria</taxon>
        <taxon>Euarchontoglires</taxon>
        <taxon>Glires</taxon>
        <taxon>Rodentia</taxon>
        <taxon>Myomorpha</taxon>
        <taxon>Muroidea</taxon>
        <taxon>Muridae</taxon>
        <taxon>Murinae</taxon>
        <taxon>Rattus</taxon>
    </lineage>
</organism>